<reference key="1">
    <citation type="journal article" date="2004" name="Genomics">
        <title>Functional rescue of vitamin C synthesis deficiency in human cells using adenoviral-based expression of murine l-gulono-gamma-lactone oxidase.</title>
        <authorList>
            <person name="Ha M.N."/>
            <person name="Graham F.L."/>
            <person name="D'Souza C.K."/>
            <person name="Muller W.J."/>
            <person name="Igdoura S.A."/>
            <person name="Schellhorn H.E."/>
        </authorList>
    </citation>
    <scope>NUCLEOTIDE SEQUENCE [MRNA]</scope>
    <scope>FUNCTION</scope>
    <scope>CATALYTIC ACTIVITY</scope>
    <scope>COFACTOR</scope>
    <scope>TISSUE SPECIFICITY</scope>
    <source>
        <strain>C57BL/6J</strain>
        <tissue>Liver</tissue>
    </source>
</reference>
<reference key="2">
    <citation type="journal article" date="2005" name="Science">
        <title>The transcriptional landscape of the mammalian genome.</title>
        <authorList>
            <person name="Carninci P."/>
            <person name="Kasukawa T."/>
            <person name="Katayama S."/>
            <person name="Gough J."/>
            <person name="Frith M.C."/>
            <person name="Maeda N."/>
            <person name="Oyama R."/>
            <person name="Ravasi T."/>
            <person name="Lenhard B."/>
            <person name="Wells C."/>
            <person name="Kodzius R."/>
            <person name="Shimokawa K."/>
            <person name="Bajic V.B."/>
            <person name="Brenner S.E."/>
            <person name="Batalov S."/>
            <person name="Forrest A.R."/>
            <person name="Zavolan M."/>
            <person name="Davis M.J."/>
            <person name="Wilming L.G."/>
            <person name="Aidinis V."/>
            <person name="Allen J.E."/>
            <person name="Ambesi-Impiombato A."/>
            <person name="Apweiler R."/>
            <person name="Aturaliya R.N."/>
            <person name="Bailey T.L."/>
            <person name="Bansal M."/>
            <person name="Baxter L."/>
            <person name="Beisel K.W."/>
            <person name="Bersano T."/>
            <person name="Bono H."/>
            <person name="Chalk A.M."/>
            <person name="Chiu K.P."/>
            <person name="Choudhary V."/>
            <person name="Christoffels A."/>
            <person name="Clutterbuck D.R."/>
            <person name="Crowe M.L."/>
            <person name="Dalla E."/>
            <person name="Dalrymple B.P."/>
            <person name="de Bono B."/>
            <person name="Della Gatta G."/>
            <person name="di Bernardo D."/>
            <person name="Down T."/>
            <person name="Engstrom P."/>
            <person name="Fagiolini M."/>
            <person name="Faulkner G."/>
            <person name="Fletcher C.F."/>
            <person name="Fukushima T."/>
            <person name="Furuno M."/>
            <person name="Futaki S."/>
            <person name="Gariboldi M."/>
            <person name="Georgii-Hemming P."/>
            <person name="Gingeras T.R."/>
            <person name="Gojobori T."/>
            <person name="Green R.E."/>
            <person name="Gustincich S."/>
            <person name="Harbers M."/>
            <person name="Hayashi Y."/>
            <person name="Hensch T.K."/>
            <person name="Hirokawa N."/>
            <person name="Hill D."/>
            <person name="Huminiecki L."/>
            <person name="Iacono M."/>
            <person name="Ikeo K."/>
            <person name="Iwama A."/>
            <person name="Ishikawa T."/>
            <person name="Jakt M."/>
            <person name="Kanapin A."/>
            <person name="Katoh M."/>
            <person name="Kawasawa Y."/>
            <person name="Kelso J."/>
            <person name="Kitamura H."/>
            <person name="Kitano H."/>
            <person name="Kollias G."/>
            <person name="Krishnan S.P."/>
            <person name="Kruger A."/>
            <person name="Kummerfeld S.K."/>
            <person name="Kurochkin I.V."/>
            <person name="Lareau L.F."/>
            <person name="Lazarevic D."/>
            <person name="Lipovich L."/>
            <person name="Liu J."/>
            <person name="Liuni S."/>
            <person name="McWilliam S."/>
            <person name="Madan Babu M."/>
            <person name="Madera M."/>
            <person name="Marchionni L."/>
            <person name="Matsuda H."/>
            <person name="Matsuzawa S."/>
            <person name="Miki H."/>
            <person name="Mignone F."/>
            <person name="Miyake S."/>
            <person name="Morris K."/>
            <person name="Mottagui-Tabar S."/>
            <person name="Mulder N."/>
            <person name="Nakano N."/>
            <person name="Nakauchi H."/>
            <person name="Ng P."/>
            <person name="Nilsson R."/>
            <person name="Nishiguchi S."/>
            <person name="Nishikawa S."/>
            <person name="Nori F."/>
            <person name="Ohara O."/>
            <person name="Okazaki Y."/>
            <person name="Orlando V."/>
            <person name="Pang K.C."/>
            <person name="Pavan W.J."/>
            <person name="Pavesi G."/>
            <person name="Pesole G."/>
            <person name="Petrovsky N."/>
            <person name="Piazza S."/>
            <person name="Reed J."/>
            <person name="Reid J.F."/>
            <person name="Ring B.Z."/>
            <person name="Ringwald M."/>
            <person name="Rost B."/>
            <person name="Ruan Y."/>
            <person name="Salzberg S.L."/>
            <person name="Sandelin A."/>
            <person name="Schneider C."/>
            <person name="Schoenbach C."/>
            <person name="Sekiguchi K."/>
            <person name="Semple C.A."/>
            <person name="Seno S."/>
            <person name="Sessa L."/>
            <person name="Sheng Y."/>
            <person name="Shibata Y."/>
            <person name="Shimada H."/>
            <person name="Shimada K."/>
            <person name="Silva D."/>
            <person name="Sinclair B."/>
            <person name="Sperling S."/>
            <person name="Stupka E."/>
            <person name="Sugiura K."/>
            <person name="Sultana R."/>
            <person name="Takenaka Y."/>
            <person name="Taki K."/>
            <person name="Tammoja K."/>
            <person name="Tan S.L."/>
            <person name="Tang S."/>
            <person name="Taylor M.S."/>
            <person name="Tegner J."/>
            <person name="Teichmann S.A."/>
            <person name="Ueda H.R."/>
            <person name="van Nimwegen E."/>
            <person name="Verardo R."/>
            <person name="Wei C.L."/>
            <person name="Yagi K."/>
            <person name="Yamanishi H."/>
            <person name="Zabarovsky E."/>
            <person name="Zhu S."/>
            <person name="Zimmer A."/>
            <person name="Hide W."/>
            <person name="Bult C."/>
            <person name="Grimmond S.M."/>
            <person name="Teasdale R.D."/>
            <person name="Liu E.T."/>
            <person name="Brusic V."/>
            <person name="Quackenbush J."/>
            <person name="Wahlestedt C."/>
            <person name="Mattick J.S."/>
            <person name="Hume D.A."/>
            <person name="Kai C."/>
            <person name="Sasaki D."/>
            <person name="Tomaru Y."/>
            <person name="Fukuda S."/>
            <person name="Kanamori-Katayama M."/>
            <person name="Suzuki M."/>
            <person name="Aoki J."/>
            <person name="Arakawa T."/>
            <person name="Iida J."/>
            <person name="Imamura K."/>
            <person name="Itoh M."/>
            <person name="Kato T."/>
            <person name="Kawaji H."/>
            <person name="Kawagashira N."/>
            <person name="Kawashima T."/>
            <person name="Kojima M."/>
            <person name="Kondo S."/>
            <person name="Konno H."/>
            <person name="Nakano K."/>
            <person name="Ninomiya N."/>
            <person name="Nishio T."/>
            <person name="Okada M."/>
            <person name="Plessy C."/>
            <person name="Shibata K."/>
            <person name="Shiraki T."/>
            <person name="Suzuki S."/>
            <person name="Tagami M."/>
            <person name="Waki K."/>
            <person name="Watahiki A."/>
            <person name="Okamura-Oho Y."/>
            <person name="Suzuki H."/>
            <person name="Kawai J."/>
            <person name="Hayashizaki Y."/>
        </authorList>
    </citation>
    <scope>NUCLEOTIDE SEQUENCE [LARGE SCALE MRNA]</scope>
    <source>
        <strain>C57BL/6J</strain>
        <tissue>Embryo</tissue>
        <tissue>Placenta</tissue>
    </source>
</reference>
<reference key="3">
    <citation type="journal article" date="2004" name="Genome Res.">
        <title>The status, quality, and expansion of the NIH full-length cDNA project: the Mammalian Gene Collection (MGC).</title>
        <authorList>
            <consortium name="The MGC Project Team"/>
        </authorList>
    </citation>
    <scope>NUCLEOTIDE SEQUENCE [LARGE SCALE MRNA]</scope>
    <source>
        <strain>FVB/N</strain>
        <tissue>Liver</tissue>
    </source>
</reference>
<reference key="4">
    <citation type="submission" date="2007-04" db="UniProtKB">
        <authorList>
            <person name="Lubec G."/>
            <person name="Kang S.U."/>
        </authorList>
    </citation>
    <scope>PROTEIN SEQUENCE OF 318-324</scope>
    <scope>IDENTIFICATION BY MASS SPECTROMETRY</scope>
    <source>
        <strain>C57BL/6J</strain>
        <tissue>Brain</tissue>
    </source>
</reference>
<reference key="5">
    <citation type="journal article" date="2010" name="Cell">
        <title>A tissue-specific atlas of mouse protein phosphorylation and expression.</title>
        <authorList>
            <person name="Huttlin E.L."/>
            <person name="Jedrychowski M.P."/>
            <person name="Elias J.E."/>
            <person name="Goswami T."/>
            <person name="Rad R."/>
            <person name="Beausoleil S.A."/>
            <person name="Villen J."/>
            <person name="Haas W."/>
            <person name="Sowa M.E."/>
            <person name="Gygi S.P."/>
        </authorList>
    </citation>
    <scope>IDENTIFICATION BY MASS SPECTROMETRY [LARGE SCALE ANALYSIS]</scope>
    <source>
        <tissue>Liver</tissue>
    </source>
</reference>
<organism>
    <name type="scientific">Mus musculus</name>
    <name type="common">Mouse</name>
    <dbReference type="NCBI Taxonomy" id="10090"/>
    <lineage>
        <taxon>Eukaryota</taxon>
        <taxon>Metazoa</taxon>
        <taxon>Chordata</taxon>
        <taxon>Craniata</taxon>
        <taxon>Vertebrata</taxon>
        <taxon>Euteleostomi</taxon>
        <taxon>Mammalia</taxon>
        <taxon>Eutheria</taxon>
        <taxon>Euarchontoglires</taxon>
        <taxon>Glires</taxon>
        <taxon>Rodentia</taxon>
        <taxon>Myomorpha</taxon>
        <taxon>Muroidea</taxon>
        <taxon>Muridae</taxon>
        <taxon>Murinae</taxon>
        <taxon>Mus</taxon>
        <taxon>Mus</taxon>
    </lineage>
</organism>
<evidence type="ECO:0000250" key="1"/>
<evidence type="ECO:0000255" key="2"/>
<evidence type="ECO:0000255" key="3">
    <source>
        <dbReference type="PROSITE-ProRule" id="PRU00718"/>
    </source>
</evidence>
<evidence type="ECO:0000269" key="4">
    <source>
    </source>
</evidence>
<evidence type="ECO:0000305" key="5"/>
<sequence length="440" mass="50478">MVHGYKGVQFQNWAKTYGCSPEMYYQPTSVGEVREVLALARQQNKKVKVVGGGHSPSDIACTDGFMIHMGKMNRVLQVDKEKKQVTVEAGILLTDLHPQLDKHGLALSNLGAVSDVTVGGVIGSGTHNTGIKHGILATQVVALTLMKADGTVLECSESSNADVFQAARVHLGCLGVILTVTLQCVPQFHLLETSFPSTLKEVLDNLDSHLKKSEYFRFLWFPHSENVSIIYQDHTNKEPSSASNWFWDYAIGFYLLEFLLWTSTYLPRLVGWINRFFFWLLFNCKKESSNLSHKIFSYECRFKQHVQDWAIPREKTKEALLELKAMLEAHPKVVAHYPVEVRFTRGDDILLSPCFQRDSCYMNIIMYRPYGKDVPRLDYWLAYETIMKKFGGRPHWAKAHNCTRKDFEKMYPAFHKFCDIREKLDPTGMFLNSYLEKVFY</sequence>
<feature type="chain" id="PRO_0000128159" description="L-gulonolactone oxidase">
    <location>
        <begin position="1"/>
        <end position="440"/>
    </location>
</feature>
<feature type="transmembrane region" description="Helical" evidence="2">
    <location>
        <begin position="251"/>
        <end position="273"/>
    </location>
</feature>
<feature type="domain" description="FAD-binding PCMH-type" evidence="3">
    <location>
        <begin position="17"/>
        <end position="187"/>
    </location>
</feature>
<feature type="modified residue" description="Pros-8alpha-FAD histidine" evidence="1">
    <location>
        <position position="54"/>
    </location>
</feature>
<feature type="sequence conflict" description="In Ref. 3; AAH19856." evidence="5" ref="3">
    <original>N</original>
    <variation>K</variation>
    <location>
        <position position="160"/>
    </location>
</feature>
<proteinExistence type="evidence at protein level"/>
<accession>P58710</accession>
<accession>Q8K152</accession>
<gene>
    <name type="primary">Gulo</name>
</gene>
<comment type="function">
    <text evidence="4">Oxidizes L-gulono-1,4-lactone to hydrogen peroxide and L-xylo-hexulonolactone which spontaneously isomerizes to L-ascorbate.</text>
</comment>
<comment type="catalytic activity">
    <reaction evidence="4">
        <text>L-gulono-1,4-lactone + O2 = L-ascorbate + H2O2 + H(+)</text>
        <dbReference type="Rhea" id="RHEA:32363"/>
        <dbReference type="ChEBI" id="CHEBI:15378"/>
        <dbReference type="ChEBI" id="CHEBI:15379"/>
        <dbReference type="ChEBI" id="CHEBI:16240"/>
        <dbReference type="ChEBI" id="CHEBI:17587"/>
        <dbReference type="ChEBI" id="CHEBI:38290"/>
        <dbReference type="EC" id="1.1.3.8"/>
    </reaction>
</comment>
<comment type="cofactor">
    <cofactor evidence="4">
        <name>FAD</name>
        <dbReference type="ChEBI" id="CHEBI:57692"/>
    </cofactor>
</comment>
<comment type="pathway">
    <text>Cofactor biosynthesis; L-ascorbate biosynthesis via UDP-alpha-D-glucuronate pathway; L-ascorbate from UDP-alpha-D-glucuronate: step 4/4.</text>
</comment>
<comment type="subcellular location">
    <subcellularLocation>
        <location evidence="1">Microsome membrane</location>
        <topology evidence="1">Single-pass membrane protein</topology>
    </subcellularLocation>
    <subcellularLocation>
        <location evidence="1">Endoplasmic reticulum membrane</location>
        <topology evidence="1">Single-pass membrane protein</topology>
    </subcellularLocation>
</comment>
<comment type="tissue specificity">
    <text evidence="4">Highly expressed in liver.</text>
</comment>
<comment type="similarity">
    <text evidence="5">Belongs to the oxygen-dependent FAD-linked oxidoreductase family.</text>
</comment>
<dbReference type="EC" id="1.1.3.8"/>
<dbReference type="EMBL" id="AY453064">
    <property type="protein sequence ID" value="AAR15891.1"/>
    <property type="molecule type" value="mRNA"/>
</dbReference>
<dbReference type="EMBL" id="AK077740">
    <property type="protein sequence ID" value="BAC36988.1"/>
    <property type="molecule type" value="mRNA"/>
</dbReference>
<dbReference type="EMBL" id="AK167460">
    <property type="protein sequence ID" value="BAE39545.1"/>
    <property type="molecule type" value="mRNA"/>
</dbReference>
<dbReference type="EMBL" id="BC019856">
    <property type="protein sequence ID" value="AAH19856.1"/>
    <property type="molecule type" value="mRNA"/>
</dbReference>
<dbReference type="EMBL" id="BC028828">
    <property type="protein sequence ID" value="AAH28828.1"/>
    <property type="molecule type" value="mRNA"/>
</dbReference>
<dbReference type="CCDS" id="CCDS36958.1"/>
<dbReference type="RefSeq" id="NP_848862.1">
    <property type="nucleotide sequence ID" value="NM_178747.3"/>
</dbReference>
<dbReference type="RefSeq" id="XP_006519129.1">
    <property type="nucleotide sequence ID" value="XM_006519066.1"/>
</dbReference>
<dbReference type="SMR" id="P58710"/>
<dbReference type="FunCoup" id="P58710">
    <property type="interactions" value="193"/>
</dbReference>
<dbReference type="STRING" id="10090.ENSMUSP00000060912"/>
<dbReference type="GlyGen" id="P58710">
    <property type="glycosylation" value="1 site, 1 O-linked glycan (1 site)"/>
</dbReference>
<dbReference type="iPTMnet" id="P58710"/>
<dbReference type="PhosphoSitePlus" id="P58710"/>
<dbReference type="SwissPalm" id="P58710"/>
<dbReference type="jPOST" id="P58710"/>
<dbReference type="PaxDb" id="10090-ENSMUSP00000060912"/>
<dbReference type="PeptideAtlas" id="P58710"/>
<dbReference type="ProteomicsDB" id="265742"/>
<dbReference type="DNASU" id="268756"/>
<dbReference type="Ensembl" id="ENSMUST00000059970.9">
    <property type="protein sequence ID" value="ENSMUSP00000060912.8"/>
    <property type="gene ID" value="ENSMUSG00000034450.9"/>
</dbReference>
<dbReference type="GeneID" id="268756"/>
<dbReference type="KEGG" id="mmu:268756"/>
<dbReference type="UCSC" id="uc007ujt.1">
    <property type="organism name" value="mouse"/>
</dbReference>
<dbReference type="AGR" id="MGI:1353434"/>
<dbReference type="CTD" id="268756"/>
<dbReference type="MGI" id="MGI:1353434">
    <property type="gene designation" value="Gulo"/>
</dbReference>
<dbReference type="VEuPathDB" id="HostDB:ENSMUSG00000034450"/>
<dbReference type="eggNOG" id="KOG4730">
    <property type="taxonomic scope" value="Eukaryota"/>
</dbReference>
<dbReference type="GeneTree" id="ENSGT00510000049722"/>
<dbReference type="HOGENOM" id="CLU_003896_4_1_1"/>
<dbReference type="InParanoid" id="P58710"/>
<dbReference type="OMA" id="YPRFGEF"/>
<dbReference type="OrthoDB" id="610608at2759"/>
<dbReference type="PhylomeDB" id="P58710"/>
<dbReference type="TreeFam" id="TF328994"/>
<dbReference type="BRENDA" id="1.1.3.8">
    <property type="organism ID" value="3474"/>
</dbReference>
<dbReference type="UniPathway" id="UPA00991">
    <property type="reaction ID" value="UER00939"/>
</dbReference>
<dbReference type="BioGRID-ORCS" id="268756">
    <property type="hits" value="4 hits in 77 CRISPR screens"/>
</dbReference>
<dbReference type="ChiTaRS" id="Gulo">
    <property type="organism name" value="mouse"/>
</dbReference>
<dbReference type="PRO" id="PR:P58710"/>
<dbReference type="Proteomes" id="UP000000589">
    <property type="component" value="Chromosome 14"/>
</dbReference>
<dbReference type="RNAct" id="P58710">
    <property type="molecule type" value="protein"/>
</dbReference>
<dbReference type="Bgee" id="ENSMUSG00000034450">
    <property type="expression patterns" value="Expressed in left lobe of liver and 45 other cell types or tissues"/>
</dbReference>
<dbReference type="GO" id="GO:0005789">
    <property type="term" value="C:endoplasmic reticulum membrane"/>
    <property type="evidence" value="ECO:0007669"/>
    <property type="project" value="UniProtKB-SubCell"/>
</dbReference>
<dbReference type="GO" id="GO:0003885">
    <property type="term" value="F:D-arabinono-1,4-lactone oxidase activity"/>
    <property type="evidence" value="ECO:0007669"/>
    <property type="project" value="InterPro"/>
</dbReference>
<dbReference type="GO" id="GO:0071949">
    <property type="term" value="F:FAD binding"/>
    <property type="evidence" value="ECO:0007669"/>
    <property type="project" value="InterPro"/>
</dbReference>
<dbReference type="GO" id="GO:0050660">
    <property type="term" value="F:flavin adenine dinucleotide binding"/>
    <property type="evidence" value="ECO:0000314"/>
    <property type="project" value="UniProtKB"/>
</dbReference>
<dbReference type="GO" id="GO:0050105">
    <property type="term" value="F:L-gulonolactone oxidase activity"/>
    <property type="evidence" value="ECO:0000314"/>
    <property type="project" value="UniProtKB"/>
</dbReference>
<dbReference type="GO" id="GO:0019853">
    <property type="term" value="P:L-ascorbic acid biosynthetic process"/>
    <property type="evidence" value="ECO:0000314"/>
    <property type="project" value="UniProtKB"/>
</dbReference>
<dbReference type="FunFam" id="1.10.45.10:FF:000004">
    <property type="entry name" value="L-gulonolactone oxidase"/>
    <property type="match status" value="1"/>
</dbReference>
<dbReference type="FunFam" id="3.30.43.10:FF:000014">
    <property type="entry name" value="L-gulonolactone oxidase"/>
    <property type="match status" value="1"/>
</dbReference>
<dbReference type="FunFam" id="3.30.465.10:FF:000035">
    <property type="entry name" value="L-gulonolactone oxidase"/>
    <property type="match status" value="1"/>
</dbReference>
<dbReference type="FunFam" id="3.30.70.2520:FF:000001">
    <property type="entry name" value="L-gulonolactone oxidase"/>
    <property type="match status" value="1"/>
</dbReference>
<dbReference type="Gene3D" id="3.30.465.10">
    <property type="match status" value="1"/>
</dbReference>
<dbReference type="Gene3D" id="3.30.70.2520">
    <property type="match status" value="1"/>
</dbReference>
<dbReference type="Gene3D" id="3.30.43.10">
    <property type="entry name" value="Uridine Diphospho-n-acetylenolpyruvylglucosamine Reductase, domain 2"/>
    <property type="match status" value="1"/>
</dbReference>
<dbReference type="Gene3D" id="1.10.45.10">
    <property type="entry name" value="Vanillyl-alcohol Oxidase, Chain A, domain 4"/>
    <property type="match status" value="1"/>
</dbReference>
<dbReference type="InterPro" id="IPR007173">
    <property type="entry name" value="ALO_C"/>
</dbReference>
<dbReference type="InterPro" id="IPR016166">
    <property type="entry name" value="FAD-bd_PCMH"/>
</dbReference>
<dbReference type="InterPro" id="IPR036318">
    <property type="entry name" value="FAD-bd_PCMH-like_sf"/>
</dbReference>
<dbReference type="InterPro" id="IPR016167">
    <property type="entry name" value="FAD-bd_PCMH_sub1"/>
</dbReference>
<dbReference type="InterPro" id="IPR016169">
    <property type="entry name" value="FAD-bd_PCMH_sub2"/>
</dbReference>
<dbReference type="InterPro" id="IPR010031">
    <property type="entry name" value="FAD_lactone_oxidase-like"/>
</dbReference>
<dbReference type="InterPro" id="IPR006094">
    <property type="entry name" value="Oxid_FAD_bind_N"/>
</dbReference>
<dbReference type="InterPro" id="IPR006093">
    <property type="entry name" value="Oxy_OxRdtase_FAD_BS"/>
</dbReference>
<dbReference type="InterPro" id="IPR030654">
    <property type="entry name" value="Sugar_lactone_oxidase"/>
</dbReference>
<dbReference type="InterPro" id="IPR016171">
    <property type="entry name" value="Vanillyl_alc_oxidase_C-sub2"/>
</dbReference>
<dbReference type="NCBIfam" id="TIGR01679">
    <property type="entry name" value="bact_FAD_ox"/>
    <property type="match status" value="1"/>
</dbReference>
<dbReference type="NCBIfam" id="TIGR01678">
    <property type="entry name" value="FAD_lactone_ox"/>
    <property type="match status" value="1"/>
</dbReference>
<dbReference type="PANTHER" id="PTHR43762">
    <property type="entry name" value="L-GULONOLACTONE OXIDASE"/>
    <property type="match status" value="1"/>
</dbReference>
<dbReference type="PANTHER" id="PTHR43762:SF8">
    <property type="entry name" value="L-GULONOLACTONE OXIDASE"/>
    <property type="match status" value="1"/>
</dbReference>
<dbReference type="Pfam" id="PF04030">
    <property type="entry name" value="ALO"/>
    <property type="match status" value="1"/>
</dbReference>
<dbReference type="Pfam" id="PF01565">
    <property type="entry name" value="FAD_binding_4"/>
    <property type="match status" value="1"/>
</dbReference>
<dbReference type="PIRSF" id="PIRSF000136">
    <property type="entry name" value="LGO_GLO"/>
    <property type="match status" value="1"/>
</dbReference>
<dbReference type="SUPFAM" id="SSF56176">
    <property type="entry name" value="FAD-binding/transporter-associated domain-like"/>
    <property type="match status" value="1"/>
</dbReference>
<dbReference type="PROSITE" id="PS51387">
    <property type="entry name" value="FAD_PCMH"/>
    <property type="match status" value="1"/>
</dbReference>
<dbReference type="PROSITE" id="PS00862">
    <property type="entry name" value="OX2_COVAL_FAD"/>
    <property type="match status" value="1"/>
</dbReference>
<keyword id="KW-0060">Ascorbate biosynthesis</keyword>
<keyword id="KW-0903">Direct protein sequencing</keyword>
<keyword id="KW-0256">Endoplasmic reticulum</keyword>
<keyword id="KW-0274">FAD</keyword>
<keyword id="KW-0285">Flavoprotein</keyword>
<keyword id="KW-0472">Membrane</keyword>
<keyword id="KW-0492">Microsome</keyword>
<keyword id="KW-0560">Oxidoreductase</keyword>
<keyword id="KW-1185">Reference proteome</keyword>
<keyword id="KW-0812">Transmembrane</keyword>
<keyword id="KW-1133">Transmembrane helix</keyword>
<protein>
    <recommendedName>
        <fullName>L-gulonolactone oxidase</fullName>
        <shortName>LGO</shortName>
        <ecNumber>1.1.3.8</ecNumber>
    </recommendedName>
    <alternativeName>
        <fullName>L-gulono-gamma-lactone oxidase</fullName>
        <shortName>GLO</shortName>
    </alternativeName>
</protein>
<name>GGLO_MOUSE</name>